<gene>
    <name evidence="1" type="primary">clpP2</name>
    <name type="ordered locus">PPA1573</name>
</gene>
<comment type="function">
    <text evidence="1">Cleaves peptides in various proteins in a process that requires ATP hydrolysis. Has a chymotrypsin-like activity. Plays a major role in the degradation of misfolded proteins.</text>
</comment>
<comment type="catalytic activity">
    <reaction evidence="1">
        <text>Hydrolysis of proteins to small peptides in the presence of ATP and magnesium. alpha-casein is the usual test substrate. In the absence of ATP, only oligopeptides shorter than five residues are hydrolyzed (such as succinyl-Leu-Tyr-|-NHMec, and Leu-Tyr-Leu-|-Tyr-Trp, in which cleavage of the -Tyr-|-Leu- and -Tyr-|-Trp bonds also occurs).</text>
        <dbReference type="EC" id="3.4.21.92"/>
    </reaction>
</comment>
<comment type="subunit">
    <text evidence="1">Fourteen ClpP subunits assemble into 2 heptameric rings which stack back to back to give a disk-like structure with a central cavity, resembling the structure of eukaryotic proteasomes.</text>
</comment>
<comment type="subcellular location">
    <subcellularLocation>
        <location evidence="1">Cytoplasm</location>
    </subcellularLocation>
</comment>
<comment type="similarity">
    <text evidence="1">Belongs to the peptidase S14 family.</text>
</comment>
<name>CLPP2_CUTAK</name>
<reference key="1">
    <citation type="journal article" date="2004" name="Science">
        <title>The complete genome sequence of Propionibacterium acnes, a commensal of human skin.</title>
        <authorList>
            <person name="Brueggemann H."/>
            <person name="Henne A."/>
            <person name="Hoster F."/>
            <person name="Liesegang H."/>
            <person name="Wiezer A."/>
            <person name="Strittmatter A."/>
            <person name="Hujer S."/>
            <person name="Duerre P."/>
            <person name="Gottschalk G."/>
        </authorList>
    </citation>
    <scope>NUCLEOTIDE SEQUENCE [LARGE SCALE GENOMIC DNA]</scope>
    <source>
        <strain>DSM 16379 / KPA171202</strain>
    </source>
</reference>
<protein>
    <recommendedName>
        <fullName evidence="1">ATP-dependent Clp protease proteolytic subunit 2</fullName>
        <ecNumber evidence="1">3.4.21.92</ecNumber>
    </recommendedName>
    <alternativeName>
        <fullName evidence="1">Endopeptidase Clp 2</fullName>
    </alternativeName>
</protein>
<dbReference type="EC" id="3.4.21.92" evidence="1"/>
<dbReference type="EMBL" id="AE017283">
    <property type="protein sequence ID" value="AAT83316.1"/>
    <property type="molecule type" value="Genomic_DNA"/>
</dbReference>
<dbReference type="SMR" id="Q6A7E9"/>
<dbReference type="MEROPS" id="S14.008"/>
<dbReference type="EnsemblBacteria" id="AAT83316">
    <property type="protein sequence ID" value="AAT83316"/>
    <property type="gene ID" value="PPA1573"/>
</dbReference>
<dbReference type="KEGG" id="pac:PPA1573"/>
<dbReference type="eggNOG" id="COG0740">
    <property type="taxonomic scope" value="Bacteria"/>
</dbReference>
<dbReference type="HOGENOM" id="CLU_058707_3_2_11"/>
<dbReference type="Proteomes" id="UP000000603">
    <property type="component" value="Chromosome"/>
</dbReference>
<dbReference type="GO" id="GO:0005737">
    <property type="term" value="C:cytoplasm"/>
    <property type="evidence" value="ECO:0007669"/>
    <property type="project" value="UniProtKB-SubCell"/>
</dbReference>
<dbReference type="GO" id="GO:0009368">
    <property type="term" value="C:endopeptidase Clp complex"/>
    <property type="evidence" value="ECO:0007669"/>
    <property type="project" value="TreeGrafter"/>
</dbReference>
<dbReference type="GO" id="GO:0004176">
    <property type="term" value="F:ATP-dependent peptidase activity"/>
    <property type="evidence" value="ECO:0007669"/>
    <property type="project" value="InterPro"/>
</dbReference>
<dbReference type="GO" id="GO:0051117">
    <property type="term" value="F:ATPase binding"/>
    <property type="evidence" value="ECO:0007669"/>
    <property type="project" value="TreeGrafter"/>
</dbReference>
<dbReference type="GO" id="GO:0004252">
    <property type="term" value="F:serine-type endopeptidase activity"/>
    <property type="evidence" value="ECO:0007669"/>
    <property type="project" value="UniProtKB-UniRule"/>
</dbReference>
<dbReference type="GO" id="GO:0006515">
    <property type="term" value="P:protein quality control for misfolded or incompletely synthesized proteins"/>
    <property type="evidence" value="ECO:0007669"/>
    <property type="project" value="TreeGrafter"/>
</dbReference>
<dbReference type="CDD" id="cd07017">
    <property type="entry name" value="S14_ClpP_2"/>
    <property type="match status" value="1"/>
</dbReference>
<dbReference type="FunFam" id="3.90.226.10:FF:000002">
    <property type="entry name" value="ATP-dependent Clp protease proteolytic subunit"/>
    <property type="match status" value="1"/>
</dbReference>
<dbReference type="Gene3D" id="3.90.226.10">
    <property type="entry name" value="2-enoyl-CoA Hydratase, Chain A, domain 1"/>
    <property type="match status" value="1"/>
</dbReference>
<dbReference type="HAMAP" id="MF_00444">
    <property type="entry name" value="ClpP"/>
    <property type="match status" value="1"/>
</dbReference>
<dbReference type="InterPro" id="IPR001907">
    <property type="entry name" value="ClpP"/>
</dbReference>
<dbReference type="InterPro" id="IPR029045">
    <property type="entry name" value="ClpP/crotonase-like_dom_sf"/>
</dbReference>
<dbReference type="InterPro" id="IPR023562">
    <property type="entry name" value="ClpP/TepA"/>
</dbReference>
<dbReference type="InterPro" id="IPR033135">
    <property type="entry name" value="ClpP_His_AS"/>
</dbReference>
<dbReference type="NCBIfam" id="NF001368">
    <property type="entry name" value="PRK00277.1"/>
    <property type="match status" value="1"/>
</dbReference>
<dbReference type="NCBIfam" id="NF009205">
    <property type="entry name" value="PRK12553.1"/>
    <property type="match status" value="1"/>
</dbReference>
<dbReference type="PANTHER" id="PTHR10381">
    <property type="entry name" value="ATP-DEPENDENT CLP PROTEASE PROTEOLYTIC SUBUNIT"/>
    <property type="match status" value="1"/>
</dbReference>
<dbReference type="PANTHER" id="PTHR10381:SF70">
    <property type="entry name" value="ATP-DEPENDENT CLP PROTEASE PROTEOLYTIC SUBUNIT"/>
    <property type="match status" value="1"/>
</dbReference>
<dbReference type="Pfam" id="PF00574">
    <property type="entry name" value="CLP_protease"/>
    <property type="match status" value="1"/>
</dbReference>
<dbReference type="PRINTS" id="PR00127">
    <property type="entry name" value="CLPPROTEASEP"/>
</dbReference>
<dbReference type="SUPFAM" id="SSF52096">
    <property type="entry name" value="ClpP/crotonase"/>
    <property type="match status" value="1"/>
</dbReference>
<dbReference type="PROSITE" id="PS00382">
    <property type="entry name" value="CLP_PROTEASE_HIS"/>
    <property type="match status" value="1"/>
</dbReference>
<sequence length="212" mass="22743">MSHNTSIASQGMPAMAGPETGGAGMTDNVYQSLLRNRIVFLGSEVKDENANALCAQMLLLNAEDPEADIYLYINSPGGSVTGGMAIYDTMQWISNDVATVTMGMAASMGQFLLTAGTPGKRYALPHAKILMHQPLGGVGGTATEIAINAKMLKDTKRELSQLNADHSGHTLEQILEDSDRDHWFTAQEALEYGLIDHVYSNASQLRGDAPNQ</sequence>
<keyword id="KW-0963">Cytoplasm</keyword>
<keyword id="KW-0378">Hydrolase</keyword>
<keyword id="KW-0645">Protease</keyword>
<keyword id="KW-0720">Serine protease</keyword>
<evidence type="ECO:0000255" key="1">
    <source>
        <dbReference type="HAMAP-Rule" id="MF_00444"/>
    </source>
</evidence>
<evidence type="ECO:0000256" key="2">
    <source>
        <dbReference type="SAM" id="MobiDB-lite"/>
    </source>
</evidence>
<feature type="chain" id="PRO_0000179616" description="ATP-dependent Clp protease proteolytic subunit 2">
    <location>
        <begin position="1"/>
        <end position="212"/>
    </location>
</feature>
<feature type="region of interest" description="Disordered" evidence="2">
    <location>
        <begin position="1"/>
        <end position="20"/>
    </location>
</feature>
<feature type="active site" description="Nucleophile" evidence="1">
    <location>
        <position position="107"/>
    </location>
</feature>
<feature type="active site" evidence="1">
    <location>
        <position position="132"/>
    </location>
</feature>
<organism>
    <name type="scientific">Cutibacterium acnes (strain DSM 16379 / KPA171202)</name>
    <name type="common">Propionibacterium acnes</name>
    <dbReference type="NCBI Taxonomy" id="267747"/>
    <lineage>
        <taxon>Bacteria</taxon>
        <taxon>Bacillati</taxon>
        <taxon>Actinomycetota</taxon>
        <taxon>Actinomycetes</taxon>
        <taxon>Propionibacteriales</taxon>
        <taxon>Propionibacteriaceae</taxon>
        <taxon>Cutibacterium</taxon>
    </lineage>
</organism>
<accession>Q6A7E9</accession>
<proteinExistence type="inferred from homology"/>